<keyword id="KW-0963">Cytoplasm</keyword>
<keyword id="KW-0312">Gluconeogenesis</keyword>
<keyword id="KW-0324">Glycolysis</keyword>
<keyword id="KW-0413">Isomerase</keyword>
<comment type="function">
    <text evidence="1">Involved in the gluconeogenesis. Catalyzes stereospecifically the conversion of dihydroxyacetone phosphate (DHAP) to D-glyceraldehyde-3-phosphate (G3P).</text>
</comment>
<comment type="catalytic activity">
    <reaction evidence="1">
        <text>D-glyceraldehyde 3-phosphate = dihydroxyacetone phosphate</text>
        <dbReference type="Rhea" id="RHEA:18585"/>
        <dbReference type="ChEBI" id="CHEBI:57642"/>
        <dbReference type="ChEBI" id="CHEBI:59776"/>
        <dbReference type="EC" id="5.3.1.1"/>
    </reaction>
</comment>
<comment type="pathway">
    <text evidence="1">Carbohydrate biosynthesis; gluconeogenesis.</text>
</comment>
<comment type="pathway">
    <text evidence="1">Carbohydrate degradation; glycolysis; D-glyceraldehyde 3-phosphate from glycerone phosphate: step 1/1.</text>
</comment>
<comment type="subunit">
    <text evidence="1">Homodimer.</text>
</comment>
<comment type="subcellular location">
    <subcellularLocation>
        <location evidence="1">Cytoplasm</location>
    </subcellularLocation>
</comment>
<comment type="similarity">
    <text evidence="1">Belongs to the triosephosphate isomerase family.</text>
</comment>
<reference key="1">
    <citation type="submission" date="2008-06" db="EMBL/GenBank/DDBJ databases">
        <title>Lactobacillus casei BL23 complete genome sequence.</title>
        <authorList>
            <person name="Maze A."/>
            <person name="Boel G."/>
            <person name="Bourand A."/>
            <person name="Loux V."/>
            <person name="Gibrat J.F."/>
            <person name="Zuniga M."/>
            <person name="Hartke A."/>
            <person name="Deutscher J."/>
        </authorList>
    </citation>
    <scope>NUCLEOTIDE SEQUENCE [LARGE SCALE GENOMIC DNA]</scope>
    <source>
        <strain>BL23</strain>
    </source>
</reference>
<protein>
    <recommendedName>
        <fullName evidence="1">Triosephosphate isomerase</fullName>
        <shortName evidence="1">TIM</shortName>
        <shortName evidence="1">TPI</shortName>
        <ecNumber evidence="1">5.3.1.1</ecNumber>
    </recommendedName>
    <alternativeName>
        <fullName evidence="1">Triose-phosphate isomerase</fullName>
    </alternativeName>
</protein>
<organism>
    <name type="scientific">Lacticaseibacillus casei (strain BL23)</name>
    <name type="common">Lactobacillus casei</name>
    <dbReference type="NCBI Taxonomy" id="543734"/>
    <lineage>
        <taxon>Bacteria</taxon>
        <taxon>Bacillati</taxon>
        <taxon>Bacillota</taxon>
        <taxon>Bacilli</taxon>
        <taxon>Lactobacillales</taxon>
        <taxon>Lactobacillaceae</taxon>
        <taxon>Lacticaseibacillus</taxon>
    </lineage>
</organism>
<name>TPIS_LACCB</name>
<proteinExistence type="inferred from homology"/>
<feature type="chain" id="PRO_1000096507" description="Triosephosphate isomerase">
    <location>
        <begin position="1"/>
        <end position="251"/>
    </location>
</feature>
<feature type="active site" description="Electrophile" evidence="1">
    <location>
        <position position="95"/>
    </location>
</feature>
<feature type="active site" description="Proton acceptor" evidence="1">
    <location>
        <position position="167"/>
    </location>
</feature>
<feature type="binding site" evidence="1">
    <location>
        <begin position="9"/>
        <end position="11"/>
    </location>
    <ligand>
        <name>substrate</name>
    </ligand>
</feature>
<feature type="binding site" evidence="1">
    <location>
        <position position="173"/>
    </location>
    <ligand>
        <name>substrate</name>
    </ligand>
</feature>
<feature type="binding site" evidence="1">
    <location>
        <position position="213"/>
    </location>
    <ligand>
        <name>substrate</name>
    </ligand>
</feature>
<feature type="binding site" evidence="1">
    <location>
        <begin position="234"/>
        <end position="235"/>
    </location>
    <ligand>
        <name>substrate</name>
    </ligand>
</feature>
<dbReference type="EC" id="5.3.1.1" evidence="1"/>
<dbReference type="EMBL" id="FM177140">
    <property type="protein sequence ID" value="CAQ66217.1"/>
    <property type="molecule type" value="Genomic_DNA"/>
</dbReference>
<dbReference type="SMR" id="B3WCW6"/>
<dbReference type="KEGG" id="lcb:LCABL_11320"/>
<dbReference type="HOGENOM" id="CLU_024251_2_3_9"/>
<dbReference type="UniPathway" id="UPA00109">
    <property type="reaction ID" value="UER00189"/>
</dbReference>
<dbReference type="UniPathway" id="UPA00138"/>
<dbReference type="GO" id="GO:0005829">
    <property type="term" value="C:cytosol"/>
    <property type="evidence" value="ECO:0007669"/>
    <property type="project" value="TreeGrafter"/>
</dbReference>
<dbReference type="GO" id="GO:0004807">
    <property type="term" value="F:triose-phosphate isomerase activity"/>
    <property type="evidence" value="ECO:0007669"/>
    <property type="project" value="UniProtKB-UniRule"/>
</dbReference>
<dbReference type="GO" id="GO:0006094">
    <property type="term" value="P:gluconeogenesis"/>
    <property type="evidence" value="ECO:0007669"/>
    <property type="project" value="UniProtKB-UniRule"/>
</dbReference>
<dbReference type="GO" id="GO:0046166">
    <property type="term" value="P:glyceraldehyde-3-phosphate biosynthetic process"/>
    <property type="evidence" value="ECO:0007669"/>
    <property type="project" value="TreeGrafter"/>
</dbReference>
<dbReference type="GO" id="GO:0019563">
    <property type="term" value="P:glycerol catabolic process"/>
    <property type="evidence" value="ECO:0007669"/>
    <property type="project" value="TreeGrafter"/>
</dbReference>
<dbReference type="GO" id="GO:0006096">
    <property type="term" value="P:glycolytic process"/>
    <property type="evidence" value="ECO:0007669"/>
    <property type="project" value="UniProtKB-UniRule"/>
</dbReference>
<dbReference type="CDD" id="cd00311">
    <property type="entry name" value="TIM"/>
    <property type="match status" value="1"/>
</dbReference>
<dbReference type="FunFam" id="3.20.20.70:FF:000016">
    <property type="entry name" value="Triosephosphate isomerase"/>
    <property type="match status" value="1"/>
</dbReference>
<dbReference type="Gene3D" id="3.20.20.70">
    <property type="entry name" value="Aldolase class I"/>
    <property type="match status" value="1"/>
</dbReference>
<dbReference type="HAMAP" id="MF_00147_B">
    <property type="entry name" value="TIM_B"/>
    <property type="match status" value="1"/>
</dbReference>
<dbReference type="InterPro" id="IPR013785">
    <property type="entry name" value="Aldolase_TIM"/>
</dbReference>
<dbReference type="InterPro" id="IPR035990">
    <property type="entry name" value="TIM_sf"/>
</dbReference>
<dbReference type="InterPro" id="IPR022896">
    <property type="entry name" value="TrioseP_Isoase_bac/euk"/>
</dbReference>
<dbReference type="InterPro" id="IPR000652">
    <property type="entry name" value="Triosephosphate_isomerase"/>
</dbReference>
<dbReference type="InterPro" id="IPR020861">
    <property type="entry name" value="Triosephosphate_isomerase_AS"/>
</dbReference>
<dbReference type="NCBIfam" id="TIGR00419">
    <property type="entry name" value="tim"/>
    <property type="match status" value="1"/>
</dbReference>
<dbReference type="PANTHER" id="PTHR21139">
    <property type="entry name" value="TRIOSEPHOSPHATE ISOMERASE"/>
    <property type="match status" value="1"/>
</dbReference>
<dbReference type="PANTHER" id="PTHR21139:SF42">
    <property type="entry name" value="TRIOSEPHOSPHATE ISOMERASE"/>
    <property type="match status" value="1"/>
</dbReference>
<dbReference type="Pfam" id="PF00121">
    <property type="entry name" value="TIM"/>
    <property type="match status" value="1"/>
</dbReference>
<dbReference type="SUPFAM" id="SSF51351">
    <property type="entry name" value="Triosephosphate isomerase (TIM)"/>
    <property type="match status" value="1"/>
</dbReference>
<dbReference type="PROSITE" id="PS00171">
    <property type="entry name" value="TIM_1"/>
    <property type="match status" value="1"/>
</dbReference>
<dbReference type="PROSITE" id="PS51440">
    <property type="entry name" value="TIM_2"/>
    <property type="match status" value="1"/>
</dbReference>
<gene>
    <name evidence="1" type="primary">tpiA</name>
    <name type="ordered locus">LCABL_11320</name>
</gene>
<sequence length="251" mass="26980">MRTPFIAGNWKMNKNPKETQEFLDGVKGKLPDASKVETVIGAPAIDLTTLVAGAEGTPLKTAAENCYFEDEGAFTGETSPKALKEMNVDYVIIGHSERRGYFHETDEDINKKAKAIFKNNLLPIICCGESLAQREAGQTEDWVASQIEAALAGLSADQVKVSVLAYEPIWAIGTGKTATADQAQEVVAHIRATVEKLYNKDTADAVRILYGGSVKPANVKELMAKPDIDGGLVGGASMDPESFIALANYQD</sequence>
<accession>B3WCW6</accession>
<evidence type="ECO:0000255" key="1">
    <source>
        <dbReference type="HAMAP-Rule" id="MF_00147"/>
    </source>
</evidence>